<organism>
    <name type="scientific">Staphylococcus aureus (strain NCTC 8325 / PS 47)</name>
    <dbReference type="NCBI Taxonomy" id="93061"/>
    <lineage>
        <taxon>Bacteria</taxon>
        <taxon>Bacillati</taxon>
        <taxon>Bacillota</taxon>
        <taxon>Bacilli</taxon>
        <taxon>Bacillales</taxon>
        <taxon>Staphylococcaceae</taxon>
        <taxon>Staphylococcus</taxon>
    </lineage>
</organism>
<protein>
    <recommendedName>
        <fullName evidence="1">RNA-binding protein SAOUHSC_00526</fullName>
    </recommendedName>
    <alternativeName>
        <fullName evidence="2">Putative ribosomal protein L7Ae-like</fullName>
    </alternativeName>
    <alternativeName>
        <fullName evidence="1">Ribosomal protein eL8-like</fullName>
    </alternativeName>
</protein>
<keyword id="KW-1185">Reference proteome</keyword>
<keyword id="KW-0694">RNA-binding</keyword>
<evidence type="ECO:0000255" key="1">
    <source>
        <dbReference type="HAMAP-Rule" id="MF_00574"/>
    </source>
</evidence>
<evidence type="ECO:0000305" key="2"/>
<accession>P0A0G6</accession>
<accession>Q2G0N4</accession>
<accession>Q53602</accession>
<accession>Q99W63</accession>
<comment type="similarity">
    <text evidence="1">Belongs to the eukaryotic ribosomal protein eL8 family.</text>
</comment>
<comment type="sequence caution" evidence="2">
    <conflict type="erroneous initiation">
        <sequence resource="EMBL-CDS" id="AAC46352"/>
    </conflict>
    <text>Extended N-terminus.</text>
</comment>
<feature type="chain" id="PRO_0000136814" description="RNA-binding protein SAOUHSC_00526">
    <location>
        <begin position="1"/>
        <end position="84"/>
    </location>
</feature>
<dbReference type="EMBL" id="U20869">
    <property type="protein sequence ID" value="AAC46352.1"/>
    <property type="status" value="ALT_INIT"/>
    <property type="molecule type" value="Genomic_DNA"/>
</dbReference>
<dbReference type="EMBL" id="CP000253">
    <property type="protein sequence ID" value="ABD29674.1"/>
    <property type="molecule type" value="Genomic_DNA"/>
</dbReference>
<dbReference type="RefSeq" id="WP_000031892.1">
    <property type="nucleotide sequence ID" value="NZ_LS483365.1"/>
</dbReference>
<dbReference type="RefSeq" id="YP_499098.1">
    <property type="nucleotide sequence ID" value="NC_007795.1"/>
</dbReference>
<dbReference type="SMR" id="P0A0G6"/>
<dbReference type="STRING" id="93061.SAOUHSC_00526"/>
<dbReference type="PaxDb" id="1280-SAXN108_0598"/>
<dbReference type="GeneID" id="3920379"/>
<dbReference type="KEGG" id="sao:SAOUHSC_00526"/>
<dbReference type="PATRIC" id="fig|93061.5.peg.472"/>
<dbReference type="eggNOG" id="COG1358">
    <property type="taxonomic scope" value="Bacteria"/>
</dbReference>
<dbReference type="HOGENOM" id="CLU_168063_0_0_9"/>
<dbReference type="OrthoDB" id="2418492at2"/>
<dbReference type="PRO" id="PR:P0A0G6"/>
<dbReference type="Proteomes" id="UP000008816">
    <property type="component" value="Chromosome"/>
</dbReference>
<dbReference type="GO" id="GO:0003723">
    <property type="term" value="F:RNA binding"/>
    <property type="evidence" value="ECO:0007669"/>
    <property type="project" value="UniProtKB-UniRule"/>
</dbReference>
<dbReference type="Gene3D" id="3.30.1330.30">
    <property type="match status" value="1"/>
</dbReference>
<dbReference type="HAMAP" id="MF_00574">
    <property type="entry name" value="Ribosomal_eL8_Bact"/>
    <property type="match status" value="1"/>
</dbReference>
<dbReference type="InterPro" id="IPR029064">
    <property type="entry name" value="Ribosomal_eL30-like_sf"/>
</dbReference>
<dbReference type="InterPro" id="IPR004038">
    <property type="entry name" value="Ribosomal_eL8/eL30/eS12/Gad45"/>
</dbReference>
<dbReference type="InterPro" id="IPR023460">
    <property type="entry name" value="RNA_bf_YbxF-like"/>
</dbReference>
<dbReference type="NCBIfam" id="NF010123">
    <property type="entry name" value="PRK13600.1"/>
    <property type="match status" value="1"/>
</dbReference>
<dbReference type="Pfam" id="PF01248">
    <property type="entry name" value="Ribosomal_L7Ae"/>
    <property type="match status" value="1"/>
</dbReference>
<dbReference type="SUPFAM" id="SSF55315">
    <property type="entry name" value="L30e-like"/>
    <property type="match status" value="1"/>
</dbReference>
<proteinExistence type="inferred from homology"/>
<reference key="1">
    <citation type="journal article" date="1998" name="J. Bacteriol.">
        <title>Penicillin-binding protein 1 of Staphylococcus aureus is essential for growth.</title>
        <authorList>
            <person name="Wada A."/>
            <person name="Watanabe H."/>
        </authorList>
    </citation>
    <scope>NUCLEOTIDE SEQUENCE [GENOMIC DNA]</scope>
</reference>
<reference key="2">
    <citation type="book" date="2006" name="Gram positive pathogens, 2nd edition">
        <title>The Staphylococcus aureus NCTC 8325 genome.</title>
        <editorList>
            <person name="Fischetti V."/>
            <person name="Novick R."/>
            <person name="Ferretti J."/>
            <person name="Portnoy D."/>
            <person name="Rood J."/>
        </editorList>
        <authorList>
            <person name="Gillaspy A.F."/>
            <person name="Worrell V."/>
            <person name="Orvis J."/>
            <person name="Roe B.A."/>
            <person name="Dyer D.W."/>
            <person name="Iandolo J.J."/>
        </authorList>
    </citation>
    <scope>NUCLEOTIDE SEQUENCE [LARGE SCALE GENOMIC DNA]</scope>
    <source>
        <strain>NCTC 8325 / PS 47</strain>
    </source>
</reference>
<sequence length="84" mass="9446">MSKEKVARFNKQHFVVGLKETLKALKKDQVTSLIIAEDVEVYLMTRVLSQINQKNIPVSFFKSKHALGKHVGINVNATIVALIK</sequence>
<name>RXL7_STAA8</name>
<gene>
    <name type="ordered locus">SAOUHSC_00526</name>
</gene>